<proteinExistence type="inferred from homology"/>
<protein>
    <recommendedName>
        <fullName evidence="1">DNA mismatch repair protein MutS</fullName>
    </recommendedName>
</protein>
<keyword id="KW-0067">ATP-binding</keyword>
<keyword id="KW-0227">DNA damage</keyword>
<keyword id="KW-0234">DNA repair</keyword>
<keyword id="KW-0238">DNA-binding</keyword>
<keyword id="KW-0547">Nucleotide-binding</keyword>
<keyword id="KW-1185">Reference proteome</keyword>
<reference key="1">
    <citation type="journal article" date="2009" name="J. Bacteriol.">
        <title>Complete genome sequence and comparative genome analysis of enteropathogenic Escherichia coli O127:H6 strain E2348/69.</title>
        <authorList>
            <person name="Iguchi A."/>
            <person name="Thomson N.R."/>
            <person name="Ogura Y."/>
            <person name="Saunders D."/>
            <person name="Ooka T."/>
            <person name="Henderson I.R."/>
            <person name="Harris D."/>
            <person name="Asadulghani M."/>
            <person name="Kurokawa K."/>
            <person name="Dean P."/>
            <person name="Kenny B."/>
            <person name="Quail M.A."/>
            <person name="Thurston S."/>
            <person name="Dougan G."/>
            <person name="Hayashi T."/>
            <person name="Parkhill J."/>
            <person name="Frankel G."/>
        </authorList>
    </citation>
    <scope>NUCLEOTIDE SEQUENCE [LARGE SCALE GENOMIC DNA]</scope>
    <source>
        <strain>E2348/69 / EPEC</strain>
    </source>
</reference>
<evidence type="ECO:0000255" key="1">
    <source>
        <dbReference type="HAMAP-Rule" id="MF_00096"/>
    </source>
</evidence>
<name>MUTS_ECO27</name>
<organism>
    <name type="scientific">Escherichia coli O127:H6 (strain E2348/69 / EPEC)</name>
    <dbReference type="NCBI Taxonomy" id="574521"/>
    <lineage>
        <taxon>Bacteria</taxon>
        <taxon>Pseudomonadati</taxon>
        <taxon>Pseudomonadota</taxon>
        <taxon>Gammaproteobacteria</taxon>
        <taxon>Enterobacterales</taxon>
        <taxon>Enterobacteriaceae</taxon>
        <taxon>Escherichia</taxon>
    </lineage>
</organism>
<sequence length="853" mass="95377">MSTIENFDAHTPMMQQYLKLKAQHPEILLFYRMGDFYELFYDDAKRASQLLDISLTKRGASAGEPIPMAGIPYHAVENYLAKLVNQGESVAICEQIGDPATSKGPVERKVVRIVTPGTISDEALLQERQDNLLAAIWQDSKGFGYATLDISSGRFRLSEPADRETMAAELQRTNPAELLYAEDFAEMSLIEGRRGLRRRPLWEFEIDTARQQLNLQFGTRDLVGFGVENAPRGLCAAGCLLQYAKDTQRTTLPHIRSITMERQQDSIIMDAATRRNLEITQNLAGGAENTLTSVLDCTVTPMGSRMLKRWLHMPVRDTRVLLERQQTIGALQDFTAELQPVLRQVGDLERILARLALRTARPRDLARMRHAFQQLPELRAQLENVDSAPVQALREKMGEFAELRDLLERAIIDTPPVLVRDGGVIATGYNEELDEWRALADGATDYLERLEVRERERTGLDTLKVGFNAVHGYYIQISRGQSHLAPINYMRRQTLKNAERYIIPELKEYEDKVLTSKGKALALEKQLYEELFDLLLPHLEALQQSASALAELDVLVNLAERAYTLNYTCPTFIDKPGIRITEGRHPVVEQVLNEPFIANPLNLSPQRRMLIITGPNMGGKSTYMRQTALIALMAYIGSYVPAQKVEIGPIDRIFTRVGAADDLASGRSTFMVEMTETANILHNATEYSLVLMDEIGRGTSTYDGLSLAWACAENLANKIKALTLFATHYFELTQLPEKMEGVANVHLDALEHGDTIAFMHSVQDGAASKSYGLAVAALAGVPKEVIKRARQKLRELESISPNAAATQVDGTQMSLLSVPEETSPAVEALENLDPDSLTPRQALEWIYRLKSLV</sequence>
<gene>
    <name evidence="1" type="primary">mutS</name>
    <name type="ordered locus">E2348C_2999</name>
</gene>
<accession>B7UHE9</accession>
<comment type="function">
    <text evidence="1">This protein is involved in the repair of mismatches in DNA. It is possible that it carries out the mismatch recognition step. This protein has a weak ATPase activity.</text>
</comment>
<comment type="similarity">
    <text evidence="1">Belongs to the DNA mismatch repair MutS family.</text>
</comment>
<feature type="chain" id="PRO_1000118681" description="DNA mismatch repair protein MutS">
    <location>
        <begin position="1"/>
        <end position="853"/>
    </location>
</feature>
<feature type="binding site" evidence="1">
    <location>
        <begin position="614"/>
        <end position="621"/>
    </location>
    <ligand>
        <name>ATP</name>
        <dbReference type="ChEBI" id="CHEBI:30616"/>
    </ligand>
</feature>
<dbReference type="EMBL" id="FM180568">
    <property type="protein sequence ID" value="CAS10547.1"/>
    <property type="molecule type" value="Genomic_DNA"/>
</dbReference>
<dbReference type="RefSeq" id="WP_000103866.1">
    <property type="nucleotide sequence ID" value="NC_011601.1"/>
</dbReference>
<dbReference type="SMR" id="B7UHE9"/>
<dbReference type="KEGG" id="ecg:E2348C_2999"/>
<dbReference type="HOGENOM" id="CLU_002472_4_0_6"/>
<dbReference type="Proteomes" id="UP000008205">
    <property type="component" value="Chromosome"/>
</dbReference>
<dbReference type="GO" id="GO:0005829">
    <property type="term" value="C:cytosol"/>
    <property type="evidence" value="ECO:0007669"/>
    <property type="project" value="TreeGrafter"/>
</dbReference>
<dbReference type="GO" id="GO:0005524">
    <property type="term" value="F:ATP binding"/>
    <property type="evidence" value="ECO:0007669"/>
    <property type="project" value="UniProtKB-UniRule"/>
</dbReference>
<dbReference type="GO" id="GO:0140664">
    <property type="term" value="F:ATP-dependent DNA damage sensor activity"/>
    <property type="evidence" value="ECO:0007669"/>
    <property type="project" value="InterPro"/>
</dbReference>
<dbReference type="GO" id="GO:0003684">
    <property type="term" value="F:damaged DNA binding"/>
    <property type="evidence" value="ECO:0007669"/>
    <property type="project" value="UniProtKB-UniRule"/>
</dbReference>
<dbReference type="GO" id="GO:0030983">
    <property type="term" value="F:mismatched DNA binding"/>
    <property type="evidence" value="ECO:0007669"/>
    <property type="project" value="InterPro"/>
</dbReference>
<dbReference type="GO" id="GO:0006298">
    <property type="term" value="P:mismatch repair"/>
    <property type="evidence" value="ECO:0007669"/>
    <property type="project" value="UniProtKB-UniRule"/>
</dbReference>
<dbReference type="CDD" id="cd03284">
    <property type="entry name" value="ABC_MutS1"/>
    <property type="match status" value="1"/>
</dbReference>
<dbReference type="FunFam" id="1.10.1420.10:FF:000002">
    <property type="entry name" value="DNA mismatch repair protein MutS"/>
    <property type="match status" value="1"/>
</dbReference>
<dbReference type="FunFam" id="3.30.420.110:FF:000001">
    <property type="entry name" value="DNA mismatch repair protein MutS"/>
    <property type="match status" value="1"/>
</dbReference>
<dbReference type="FunFam" id="3.40.1170.10:FF:000001">
    <property type="entry name" value="DNA mismatch repair protein MutS"/>
    <property type="match status" value="1"/>
</dbReference>
<dbReference type="FunFam" id="3.40.50.300:FF:000283">
    <property type="entry name" value="DNA mismatch repair protein MutS"/>
    <property type="match status" value="1"/>
</dbReference>
<dbReference type="Gene3D" id="1.10.1420.10">
    <property type="match status" value="2"/>
</dbReference>
<dbReference type="Gene3D" id="6.10.140.430">
    <property type="match status" value="1"/>
</dbReference>
<dbReference type="Gene3D" id="3.40.1170.10">
    <property type="entry name" value="DNA repair protein MutS, domain I"/>
    <property type="match status" value="1"/>
</dbReference>
<dbReference type="Gene3D" id="3.30.420.110">
    <property type="entry name" value="MutS, connector domain"/>
    <property type="match status" value="1"/>
</dbReference>
<dbReference type="Gene3D" id="3.40.50.300">
    <property type="entry name" value="P-loop containing nucleotide triphosphate hydrolases"/>
    <property type="match status" value="1"/>
</dbReference>
<dbReference type="HAMAP" id="MF_00096">
    <property type="entry name" value="MutS"/>
    <property type="match status" value="1"/>
</dbReference>
<dbReference type="InterPro" id="IPR005748">
    <property type="entry name" value="DNA_mismatch_repair_MutS"/>
</dbReference>
<dbReference type="InterPro" id="IPR007695">
    <property type="entry name" value="DNA_mismatch_repair_MutS-lik_N"/>
</dbReference>
<dbReference type="InterPro" id="IPR017261">
    <property type="entry name" value="DNA_mismatch_repair_MutS/MSH"/>
</dbReference>
<dbReference type="InterPro" id="IPR000432">
    <property type="entry name" value="DNA_mismatch_repair_MutS_C"/>
</dbReference>
<dbReference type="InterPro" id="IPR007861">
    <property type="entry name" value="DNA_mismatch_repair_MutS_clamp"/>
</dbReference>
<dbReference type="InterPro" id="IPR007696">
    <property type="entry name" value="DNA_mismatch_repair_MutS_core"/>
</dbReference>
<dbReference type="InterPro" id="IPR016151">
    <property type="entry name" value="DNA_mismatch_repair_MutS_N"/>
</dbReference>
<dbReference type="InterPro" id="IPR036187">
    <property type="entry name" value="DNA_mismatch_repair_MutS_sf"/>
</dbReference>
<dbReference type="InterPro" id="IPR007860">
    <property type="entry name" value="DNA_mmatch_repair_MutS_con_dom"/>
</dbReference>
<dbReference type="InterPro" id="IPR045076">
    <property type="entry name" value="MutS"/>
</dbReference>
<dbReference type="InterPro" id="IPR036678">
    <property type="entry name" value="MutS_con_dom_sf"/>
</dbReference>
<dbReference type="InterPro" id="IPR027417">
    <property type="entry name" value="P-loop_NTPase"/>
</dbReference>
<dbReference type="NCBIfam" id="TIGR01070">
    <property type="entry name" value="mutS1"/>
    <property type="match status" value="1"/>
</dbReference>
<dbReference type="NCBIfam" id="NF003810">
    <property type="entry name" value="PRK05399.1"/>
    <property type="match status" value="1"/>
</dbReference>
<dbReference type="PANTHER" id="PTHR11361:SF34">
    <property type="entry name" value="DNA MISMATCH REPAIR PROTEIN MSH1, MITOCHONDRIAL"/>
    <property type="match status" value="1"/>
</dbReference>
<dbReference type="PANTHER" id="PTHR11361">
    <property type="entry name" value="DNA MISMATCH REPAIR PROTEIN MUTS FAMILY MEMBER"/>
    <property type="match status" value="1"/>
</dbReference>
<dbReference type="Pfam" id="PF01624">
    <property type="entry name" value="MutS_I"/>
    <property type="match status" value="1"/>
</dbReference>
<dbReference type="Pfam" id="PF05188">
    <property type="entry name" value="MutS_II"/>
    <property type="match status" value="1"/>
</dbReference>
<dbReference type="Pfam" id="PF05192">
    <property type="entry name" value="MutS_III"/>
    <property type="match status" value="1"/>
</dbReference>
<dbReference type="Pfam" id="PF05190">
    <property type="entry name" value="MutS_IV"/>
    <property type="match status" value="1"/>
</dbReference>
<dbReference type="Pfam" id="PF00488">
    <property type="entry name" value="MutS_V"/>
    <property type="match status" value="1"/>
</dbReference>
<dbReference type="PIRSF" id="PIRSF037677">
    <property type="entry name" value="DNA_mis_repair_Msh6"/>
    <property type="match status" value="1"/>
</dbReference>
<dbReference type="SMART" id="SM00534">
    <property type="entry name" value="MUTSac"/>
    <property type="match status" value="1"/>
</dbReference>
<dbReference type="SMART" id="SM00533">
    <property type="entry name" value="MUTSd"/>
    <property type="match status" value="1"/>
</dbReference>
<dbReference type="SUPFAM" id="SSF55271">
    <property type="entry name" value="DNA repair protein MutS, domain I"/>
    <property type="match status" value="1"/>
</dbReference>
<dbReference type="SUPFAM" id="SSF53150">
    <property type="entry name" value="DNA repair protein MutS, domain II"/>
    <property type="match status" value="1"/>
</dbReference>
<dbReference type="SUPFAM" id="SSF48334">
    <property type="entry name" value="DNA repair protein MutS, domain III"/>
    <property type="match status" value="1"/>
</dbReference>
<dbReference type="SUPFAM" id="SSF52540">
    <property type="entry name" value="P-loop containing nucleoside triphosphate hydrolases"/>
    <property type="match status" value="1"/>
</dbReference>
<dbReference type="PROSITE" id="PS00486">
    <property type="entry name" value="DNA_MISMATCH_REPAIR_2"/>
    <property type="match status" value="1"/>
</dbReference>